<dbReference type="EC" id="1.3.1.104"/>
<dbReference type="EMBL" id="CR761275">
    <property type="protein sequence ID" value="CAJ83709.1"/>
    <property type="molecule type" value="mRNA"/>
</dbReference>
<dbReference type="RefSeq" id="NP_001016371.1">
    <property type="nucleotide sequence ID" value="NM_001016371.2"/>
</dbReference>
<dbReference type="SMR" id="Q28GQ2"/>
<dbReference type="FunCoup" id="Q28GQ2">
    <property type="interactions" value="2228"/>
</dbReference>
<dbReference type="STRING" id="8364.ENSXETP00000054358"/>
<dbReference type="PaxDb" id="8364-ENSXETP00000031439"/>
<dbReference type="GeneID" id="549125"/>
<dbReference type="KEGG" id="xtr:549125"/>
<dbReference type="AGR" id="Xenbase:XB-GENE-1007523"/>
<dbReference type="CTD" id="51102"/>
<dbReference type="Xenbase" id="XB-GENE-1007523">
    <property type="gene designation" value="mecr"/>
</dbReference>
<dbReference type="eggNOG" id="KOG0025">
    <property type="taxonomic scope" value="Eukaryota"/>
</dbReference>
<dbReference type="HOGENOM" id="CLU_026673_17_1_1"/>
<dbReference type="InParanoid" id="Q28GQ2"/>
<dbReference type="OMA" id="YGYTQSK"/>
<dbReference type="OrthoDB" id="7482721at2759"/>
<dbReference type="PhylomeDB" id="Q28GQ2"/>
<dbReference type="TreeFam" id="TF312886"/>
<dbReference type="Reactome" id="R-XTR-77346">
    <property type="pathway name" value="Beta oxidation of decanoyl-CoA to octanoyl-CoA-CoA"/>
</dbReference>
<dbReference type="Proteomes" id="UP000008143">
    <property type="component" value="Chromosome 2"/>
</dbReference>
<dbReference type="Bgee" id="ENSXETG00000014371">
    <property type="expression patterns" value="Expressed in mesonephros and 31 other cell types or tissues"/>
</dbReference>
<dbReference type="ExpressionAtlas" id="Q28GQ2">
    <property type="expression patterns" value="differential"/>
</dbReference>
<dbReference type="GO" id="GO:0005739">
    <property type="term" value="C:mitochondrion"/>
    <property type="evidence" value="ECO:0007669"/>
    <property type="project" value="UniProtKB-SubCell"/>
</dbReference>
<dbReference type="GO" id="GO:0141148">
    <property type="term" value="F:enoyl-[acyl-carrier-protein] reductase (NADPH) activity"/>
    <property type="evidence" value="ECO:0007669"/>
    <property type="project" value="UniProtKB-EC"/>
</dbReference>
<dbReference type="GO" id="GO:0006633">
    <property type="term" value="P:fatty acid biosynthetic process"/>
    <property type="evidence" value="ECO:0007669"/>
    <property type="project" value="UniProtKB-KW"/>
</dbReference>
<dbReference type="GO" id="GO:0039020">
    <property type="term" value="P:pronephric nephron tubule development"/>
    <property type="evidence" value="ECO:0000315"/>
    <property type="project" value="UniProtKB"/>
</dbReference>
<dbReference type="CDD" id="cd08290">
    <property type="entry name" value="ETR"/>
    <property type="match status" value="1"/>
</dbReference>
<dbReference type="FunFam" id="3.40.50.720:FF:000112">
    <property type="entry name" value="Enoyl-[acyl-carrier-protein] reductase 1, mitochondrial"/>
    <property type="match status" value="1"/>
</dbReference>
<dbReference type="FunFam" id="3.90.180.10:FF:000010">
    <property type="entry name" value="Enoyl-[acyl-carrier-protein] reductase, mitochondrial"/>
    <property type="match status" value="1"/>
</dbReference>
<dbReference type="Gene3D" id="3.90.180.10">
    <property type="entry name" value="Medium-chain alcohol dehydrogenases, catalytic domain"/>
    <property type="match status" value="1"/>
</dbReference>
<dbReference type="Gene3D" id="3.40.50.720">
    <property type="entry name" value="NAD(P)-binding Rossmann-like Domain"/>
    <property type="match status" value="1"/>
</dbReference>
<dbReference type="InterPro" id="IPR013149">
    <property type="entry name" value="ADH-like_C"/>
</dbReference>
<dbReference type="InterPro" id="IPR013154">
    <property type="entry name" value="ADH-like_N"/>
</dbReference>
<dbReference type="InterPro" id="IPR011032">
    <property type="entry name" value="GroES-like_sf"/>
</dbReference>
<dbReference type="InterPro" id="IPR051034">
    <property type="entry name" value="Mito_Enoyl-ACP_Reductase"/>
</dbReference>
<dbReference type="InterPro" id="IPR036291">
    <property type="entry name" value="NAD(P)-bd_dom_sf"/>
</dbReference>
<dbReference type="InterPro" id="IPR020843">
    <property type="entry name" value="PKS_ER"/>
</dbReference>
<dbReference type="PANTHER" id="PTHR43981">
    <property type="entry name" value="ENOYL-[ACYL-CARRIER-PROTEIN] REDUCTASE, MITOCHONDRIAL"/>
    <property type="match status" value="1"/>
</dbReference>
<dbReference type="PANTHER" id="PTHR43981:SF9">
    <property type="entry name" value="ENOYL-[ACYL-CARRIER-PROTEIN] REDUCTASE, MITOCHONDRIAL"/>
    <property type="match status" value="1"/>
</dbReference>
<dbReference type="Pfam" id="PF08240">
    <property type="entry name" value="ADH_N"/>
    <property type="match status" value="1"/>
</dbReference>
<dbReference type="Pfam" id="PF00107">
    <property type="entry name" value="ADH_zinc_N"/>
    <property type="match status" value="1"/>
</dbReference>
<dbReference type="SMART" id="SM00829">
    <property type="entry name" value="PKS_ER"/>
    <property type="match status" value="1"/>
</dbReference>
<dbReference type="SUPFAM" id="SSF50129">
    <property type="entry name" value="GroES-like"/>
    <property type="match status" value="1"/>
</dbReference>
<dbReference type="SUPFAM" id="SSF51735">
    <property type="entry name" value="NAD(P)-binding Rossmann-fold domains"/>
    <property type="match status" value="1"/>
</dbReference>
<comment type="function">
    <text evidence="2 3 4 6">Catalyzes the NADPH-dependent reduction of trans-2-enoyl thioesters in mitochondrial fatty acid synthesis (fatty acid synthesis type II). Fatty acid chain elongation in mitochondria uses acyl carrier protein (ACP) as an acyl group carrier, but the enzyme accepts both ACP and CoA thioesters as substrates in vitro (By similarity). May provide the octanoyl chain used for lipoic acid biosynthesis, regulating protein lipoylation and mitochondrial respiratory activity (By similarity). Involved in iron homeostasis; affecting Fe-S cluster assembly and ceramide metabolism (By similarity). Required for proper morphology and bioenergetic functions of mitochondria (By similarity). Required for maintenance of neurons (By similarity). Functions in pronephros development, regulating late differentiation of all pronephric tubule segments (PubMed:18472403).</text>
</comment>
<comment type="catalytic activity">
    <reaction evidence="2">
        <text>a 2,3-saturated acyl-[ACP] + NADP(+) = a (2E)-enoyl-[ACP] + NADPH + H(+)</text>
        <dbReference type="Rhea" id="RHEA:22564"/>
        <dbReference type="Rhea" id="RHEA-COMP:9925"/>
        <dbReference type="Rhea" id="RHEA-COMP:9926"/>
        <dbReference type="ChEBI" id="CHEBI:15378"/>
        <dbReference type="ChEBI" id="CHEBI:57783"/>
        <dbReference type="ChEBI" id="CHEBI:58349"/>
        <dbReference type="ChEBI" id="CHEBI:78784"/>
        <dbReference type="ChEBI" id="CHEBI:78785"/>
        <dbReference type="EC" id="1.3.1.104"/>
    </reaction>
</comment>
<comment type="subunit">
    <text evidence="2">Homodimer.</text>
</comment>
<comment type="subcellular location">
    <subcellularLocation>
        <location evidence="2">Mitochondrion</location>
    </subcellularLocation>
</comment>
<comment type="tissue specificity">
    <text evidence="6">Expressed in the developing pronephros.</text>
</comment>
<comment type="similarity">
    <text evidence="5">Belongs to the zinc-containing alcohol dehydrogenase family. Quinone oxidoreductase subfamily.</text>
</comment>
<reference key="1">
    <citation type="submission" date="2006-10" db="EMBL/GenBank/DDBJ databases">
        <authorList>
            <consortium name="Sanger Xenopus tropicalis EST/cDNA project"/>
        </authorList>
    </citation>
    <scope>NUCLEOTIDE SEQUENCE [LARGE SCALE MRNA]</scope>
    <source>
        <tissue>Egg</tissue>
    </source>
</reference>
<reference key="2">
    <citation type="journal article" date="2008" name="Mech. Dev.">
        <title>A functional screen for genes involved in Xenopus pronephros development.</title>
        <authorList>
            <person name="Kyuno J."/>
            <person name="Masse K."/>
            <person name="Jones E.A."/>
        </authorList>
    </citation>
    <scope>FUNCTION</scope>
    <scope>TISSUE SPECIFICITY</scope>
</reference>
<proteinExistence type="evidence at transcript level"/>
<sequence>MWLGLRLFHRPFSSLAARGLVYEKHGEPLQVLRLKNVNITHPADNEVRVKMLAAPINPSDINMVQGTYALLPQLPAVGGNEGVGVVVEIGRHVSSMRPGDWVVPVDAGLGTWCTEAVFSEDSLVRVPSDIPVAGAATVSVNPCTAYRLLSDFETLRPGDTIIQNASNSGVGQAVIQIATSLGITTINVVRDREDLSSLIQRLRDLGADHVITEEQLRKPEMKDLFKNCPRPRLALNCVGGKSTTEMLRHLDYGGTMVTYGGMSKQPVTVPVSALIFKNVKLCGFWVTQWKKERAQTDREEIVKMIRDLCDLIRRGKLVPPPSTQRPLEDFSRALQDSQTPFLSRKQILIM</sequence>
<keyword id="KW-0217">Developmental protein</keyword>
<keyword id="KW-0275">Fatty acid biosynthesis</keyword>
<keyword id="KW-0276">Fatty acid metabolism</keyword>
<keyword id="KW-0444">Lipid biosynthesis</keyword>
<keyword id="KW-0443">Lipid metabolism</keyword>
<keyword id="KW-0496">Mitochondrion</keyword>
<keyword id="KW-0521">NADP</keyword>
<keyword id="KW-0560">Oxidoreductase</keyword>
<keyword id="KW-1185">Reference proteome</keyword>
<keyword id="KW-0809">Transit peptide</keyword>
<feature type="transit peptide" description="Mitochondrion" evidence="5">
    <location>
        <begin position="1"/>
        <end position="12"/>
    </location>
</feature>
<feature type="chain" id="PRO_0000391692" description="Enoyl-[acyl-carrier-protein] reductase, mitochondrial" evidence="5">
    <location>
        <begin position="13"/>
        <end position="350"/>
    </location>
</feature>
<feature type="active site" description="Proton donor" evidence="1">
    <location>
        <position position="68"/>
    </location>
</feature>
<feature type="binding site" evidence="1">
    <location>
        <position position="141"/>
    </location>
    <ligand>
        <name>NADP(+)</name>
        <dbReference type="ChEBI" id="CHEBI:58349"/>
    </ligand>
</feature>
<feature type="binding site" evidence="1">
    <location>
        <begin position="167"/>
        <end position="170"/>
    </location>
    <ligand>
        <name>NADP(+)</name>
        <dbReference type="ChEBI" id="CHEBI:58349"/>
    </ligand>
</feature>
<feature type="binding site" evidence="1">
    <location>
        <begin position="190"/>
        <end position="192"/>
    </location>
    <ligand>
        <name>NADP(+)</name>
        <dbReference type="ChEBI" id="CHEBI:58349"/>
    </ligand>
</feature>
<feature type="binding site" evidence="1">
    <location>
        <begin position="259"/>
        <end position="262"/>
    </location>
    <ligand>
        <name>NADP(+)</name>
        <dbReference type="ChEBI" id="CHEBI:58349"/>
    </ligand>
</feature>
<feature type="binding site" evidence="1">
    <location>
        <begin position="284"/>
        <end position="286"/>
    </location>
    <ligand>
        <name>NADP(+)</name>
        <dbReference type="ChEBI" id="CHEBI:58349"/>
    </ligand>
</feature>
<feature type="binding site" evidence="1">
    <location>
        <position position="345"/>
    </location>
    <ligand>
        <name>NADP(+)</name>
        <dbReference type="ChEBI" id="CHEBI:58349"/>
    </ligand>
</feature>
<accession>Q28GQ2</accession>
<name>MECR_XENTR</name>
<evidence type="ECO:0000250" key="1">
    <source>
        <dbReference type="UniProtKB" id="Q8WZM3"/>
    </source>
</evidence>
<evidence type="ECO:0000250" key="2">
    <source>
        <dbReference type="UniProtKB" id="Q9BV79"/>
    </source>
</evidence>
<evidence type="ECO:0000250" key="3">
    <source>
        <dbReference type="UniProtKB" id="Q9DCS3"/>
    </source>
</evidence>
<evidence type="ECO:0000250" key="4">
    <source>
        <dbReference type="UniProtKB" id="Q9V6U9"/>
    </source>
</evidence>
<evidence type="ECO:0000255" key="5"/>
<evidence type="ECO:0000269" key="6">
    <source>
    </source>
</evidence>
<protein>
    <recommendedName>
        <fullName>Enoyl-[acyl-carrier-protein] reductase, mitochondrial</fullName>
        <ecNumber>1.3.1.104</ecNumber>
    </recommendedName>
    <alternativeName>
        <fullName>2-enoyl thioester reductase</fullName>
    </alternativeName>
</protein>
<organism>
    <name type="scientific">Xenopus tropicalis</name>
    <name type="common">Western clawed frog</name>
    <name type="synonym">Silurana tropicalis</name>
    <dbReference type="NCBI Taxonomy" id="8364"/>
    <lineage>
        <taxon>Eukaryota</taxon>
        <taxon>Metazoa</taxon>
        <taxon>Chordata</taxon>
        <taxon>Craniata</taxon>
        <taxon>Vertebrata</taxon>
        <taxon>Euteleostomi</taxon>
        <taxon>Amphibia</taxon>
        <taxon>Batrachia</taxon>
        <taxon>Anura</taxon>
        <taxon>Pipoidea</taxon>
        <taxon>Pipidae</taxon>
        <taxon>Xenopodinae</taxon>
        <taxon>Xenopus</taxon>
        <taxon>Silurana</taxon>
    </lineage>
</organism>
<gene>
    <name type="primary">mecr</name>
    <name type="ORF">TEgg103l11.1</name>
</gene>